<proteinExistence type="inferred from homology"/>
<accession>Q18BC1</accession>
<dbReference type="EMBL" id="AM180355">
    <property type="protein sequence ID" value="CAJ68113.1"/>
    <property type="molecule type" value="Genomic_DNA"/>
</dbReference>
<dbReference type="RefSeq" id="WP_003419350.1">
    <property type="nucleotide sequence ID" value="NZ_JAUPES010000045.1"/>
</dbReference>
<dbReference type="RefSeq" id="YP_001087751.1">
    <property type="nucleotide sequence ID" value="NC_009089.1"/>
</dbReference>
<dbReference type="SMR" id="Q18BC1"/>
<dbReference type="STRING" id="272563.CD630_12570"/>
<dbReference type="EnsemblBacteria" id="CAJ68113">
    <property type="protein sequence ID" value="CAJ68113"/>
    <property type="gene ID" value="CD630_12570"/>
</dbReference>
<dbReference type="GeneID" id="66353658"/>
<dbReference type="KEGG" id="cdf:CD630_12570"/>
<dbReference type="KEGG" id="pdc:CDIF630_01410"/>
<dbReference type="PATRIC" id="fig|272563.120.peg.1315"/>
<dbReference type="eggNOG" id="COG0335">
    <property type="taxonomic scope" value="Bacteria"/>
</dbReference>
<dbReference type="OrthoDB" id="9803541at2"/>
<dbReference type="PhylomeDB" id="Q18BC1"/>
<dbReference type="BioCyc" id="PDIF272563:G12WB-1391-MONOMER"/>
<dbReference type="Proteomes" id="UP000001978">
    <property type="component" value="Chromosome"/>
</dbReference>
<dbReference type="GO" id="GO:0022625">
    <property type="term" value="C:cytosolic large ribosomal subunit"/>
    <property type="evidence" value="ECO:0007669"/>
    <property type="project" value="TreeGrafter"/>
</dbReference>
<dbReference type="GO" id="GO:0003735">
    <property type="term" value="F:structural constituent of ribosome"/>
    <property type="evidence" value="ECO:0007669"/>
    <property type="project" value="InterPro"/>
</dbReference>
<dbReference type="GO" id="GO:0006412">
    <property type="term" value="P:translation"/>
    <property type="evidence" value="ECO:0007669"/>
    <property type="project" value="UniProtKB-UniRule"/>
</dbReference>
<dbReference type="FunFam" id="2.30.30.790:FF:000001">
    <property type="entry name" value="50S ribosomal protein L19"/>
    <property type="match status" value="1"/>
</dbReference>
<dbReference type="Gene3D" id="2.30.30.790">
    <property type="match status" value="1"/>
</dbReference>
<dbReference type="HAMAP" id="MF_00402">
    <property type="entry name" value="Ribosomal_bL19"/>
    <property type="match status" value="1"/>
</dbReference>
<dbReference type="InterPro" id="IPR001857">
    <property type="entry name" value="Ribosomal_bL19"/>
</dbReference>
<dbReference type="InterPro" id="IPR038657">
    <property type="entry name" value="Ribosomal_bL19_sf"/>
</dbReference>
<dbReference type="InterPro" id="IPR008991">
    <property type="entry name" value="Translation_prot_SH3-like_sf"/>
</dbReference>
<dbReference type="NCBIfam" id="TIGR01024">
    <property type="entry name" value="rplS_bact"/>
    <property type="match status" value="1"/>
</dbReference>
<dbReference type="PANTHER" id="PTHR15680:SF9">
    <property type="entry name" value="LARGE RIBOSOMAL SUBUNIT PROTEIN BL19M"/>
    <property type="match status" value="1"/>
</dbReference>
<dbReference type="PANTHER" id="PTHR15680">
    <property type="entry name" value="RIBOSOMAL PROTEIN L19"/>
    <property type="match status" value="1"/>
</dbReference>
<dbReference type="Pfam" id="PF01245">
    <property type="entry name" value="Ribosomal_L19"/>
    <property type="match status" value="1"/>
</dbReference>
<dbReference type="PIRSF" id="PIRSF002191">
    <property type="entry name" value="Ribosomal_L19"/>
    <property type="match status" value="1"/>
</dbReference>
<dbReference type="PRINTS" id="PR00061">
    <property type="entry name" value="RIBOSOMALL19"/>
</dbReference>
<dbReference type="SUPFAM" id="SSF50104">
    <property type="entry name" value="Translation proteins SH3-like domain"/>
    <property type="match status" value="1"/>
</dbReference>
<name>RL19_CLOD6</name>
<keyword id="KW-1185">Reference proteome</keyword>
<keyword id="KW-0687">Ribonucleoprotein</keyword>
<keyword id="KW-0689">Ribosomal protein</keyword>
<gene>
    <name evidence="1" type="primary">rplS</name>
    <name type="ordered locus">CD630_12570</name>
</gene>
<organism>
    <name type="scientific">Clostridioides difficile (strain 630)</name>
    <name type="common">Peptoclostridium difficile</name>
    <dbReference type="NCBI Taxonomy" id="272563"/>
    <lineage>
        <taxon>Bacteria</taxon>
        <taxon>Bacillati</taxon>
        <taxon>Bacillota</taxon>
        <taxon>Clostridia</taxon>
        <taxon>Peptostreptococcales</taxon>
        <taxon>Peptostreptococcaceae</taxon>
        <taxon>Clostridioides</taxon>
    </lineage>
</organism>
<protein>
    <recommendedName>
        <fullName evidence="1">Large ribosomal subunit protein bL19</fullName>
    </recommendedName>
    <alternativeName>
        <fullName evidence="2">50S ribosomal protein L19</fullName>
    </alternativeName>
</protein>
<reference key="1">
    <citation type="journal article" date="2006" name="Nat. Genet.">
        <title>The multidrug-resistant human pathogen Clostridium difficile has a highly mobile, mosaic genome.</title>
        <authorList>
            <person name="Sebaihia M."/>
            <person name="Wren B.W."/>
            <person name="Mullany P."/>
            <person name="Fairweather N.F."/>
            <person name="Minton N."/>
            <person name="Stabler R."/>
            <person name="Thomson N.R."/>
            <person name="Roberts A.P."/>
            <person name="Cerdeno-Tarraga A.M."/>
            <person name="Wang H."/>
            <person name="Holden M.T.G."/>
            <person name="Wright A."/>
            <person name="Churcher C."/>
            <person name="Quail M.A."/>
            <person name="Baker S."/>
            <person name="Bason N."/>
            <person name="Brooks K."/>
            <person name="Chillingworth T."/>
            <person name="Cronin A."/>
            <person name="Davis P."/>
            <person name="Dowd L."/>
            <person name="Fraser A."/>
            <person name="Feltwell T."/>
            <person name="Hance Z."/>
            <person name="Holroyd S."/>
            <person name="Jagels K."/>
            <person name="Moule S."/>
            <person name="Mungall K."/>
            <person name="Price C."/>
            <person name="Rabbinowitsch E."/>
            <person name="Sharp S."/>
            <person name="Simmonds M."/>
            <person name="Stevens K."/>
            <person name="Unwin L."/>
            <person name="Whithead S."/>
            <person name="Dupuy B."/>
            <person name="Dougan G."/>
            <person name="Barrell B."/>
            <person name="Parkhill J."/>
        </authorList>
    </citation>
    <scope>NUCLEOTIDE SEQUENCE [LARGE SCALE GENOMIC DNA]</scope>
    <source>
        <strain>630</strain>
    </source>
</reference>
<evidence type="ECO:0000255" key="1">
    <source>
        <dbReference type="HAMAP-Rule" id="MF_00402"/>
    </source>
</evidence>
<evidence type="ECO:0000305" key="2"/>
<sequence length="116" mass="13296">MNEMLRAIEQEQLKNEVPNFGPGDTVKVHVRIIEGKRERIQVFEGVVLKRQGGGARETFTVRKMSFNVGVERTFPVHSPKIEKIEVTRKGKVRRAKLNYLRGRVGKAAKIKEARNK</sequence>
<comment type="function">
    <text evidence="1">This protein is located at the 30S-50S ribosomal subunit interface and may play a role in the structure and function of the aminoacyl-tRNA binding site.</text>
</comment>
<comment type="similarity">
    <text evidence="1">Belongs to the bacterial ribosomal protein bL19 family.</text>
</comment>
<feature type="chain" id="PRO_1000049663" description="Large ribosomal subunit protein bL19">
    <location>
        <begin position="1"/>
        <end position="116"/>
    </location>
</feature>